<feature type="chain" id="PRO_0000082288" description="Taste receptor type 2 member 40">
    <location>
        <begin position="1"/>
        <end position="323"/>
    </location>
</feature>
<feature type="topological domain" description="Extracellular" evidence="1">
    <location>
        <begin position="1"/>
        <end position="14"/>
    </location>
</feature>
<feature type="transmembrane region" description="Helical; Name=1" evidence="1">
    <location>
        <begin position="15"/>
        <end position="35"/>
    </location>
</feature>
<feature type="topological domain" description="Cytoplasmic" evidence="1">
    <location>
        <begin position="36"/>
        <end position="58"/>
    </location>
</feature>
<feature type="transmembrane region" description="Helical; Name=2" evidence="1">
    <location>
        <begin position="59"/>
        <end position="79"/>
    </location>
</feature>
<feature type="topological domain" description="Extracellular" evidence="1">
    <location>
        <begin position="80"/>
        <end position="100"/>
    </location>
</feature>
<feature type="transmembrane region" description="Helical; Name=3" evidence="1">
    <location>
        <begin position="101"/>
        <end position="121"/>
    </location>
</feature>
<feature type="topological domain" description="Cytoplasmic" evidence="1">
    <location>
        <begin position="122"/>
        <end position="140"/>
    </location>
</feature>
<feature type="transmembrane region" description="Helical; Name=4" evidence="1">
    <location>
        <begin position="141"/>
        <end position="162"/>
    </location>
</feature>
<feature type="topological domain" description="Extracellular" evidence="1">
    <location>
        <begin position="163"/>
        <end position="190"/>
    </location>
</feature>
<feature type="transmembrane region" description="Helical; Name=5" evidence="1">
    <location>
        <begin position="191"/>
        <end position="211"/>
    </location>
</feature>
<feature type="topological domain" description="Cytoplasmic" evidence="1">
    <location>
        <begin position="212"/>
        <end position="247"/>
    </location>
</feature>
<feature type="transmembrane region" description="Helical; Name=6" evidence="1">
    <location>
        <begin position="248"/>
        <end position="268"/>
    </location>
</feature>
<feature type="topological domain" description="Extracellular" evidence="1">
    <location>
        <begin position="269"/>
        <end position="276"/>
    </location>
</feature>
<feature type="transmembrane region" description="Helical; Name=7" evidence="1">
    <location>
        <begin position="277"/>
        <end position="297"/>
    </location>
</feature>
<feature type="topological domain" description="Cytoplasmic" evidence="1">
    <location>
        <begin position="298"/>
        <end position="323"/>
    </location>
</feature>
<feature type="glycosylation site" description="N-linked (GlcNAc...) asparagine" evidence="1">
    <location>
        <position position="170"/>
    </location>
</feature>
<feature type="glycosylation site" description="N-linked (GlcNAc...) asparagine" evidence="1">
    <location>
        <position position="179"/>
    </location>
</feature>
<feature type="sequence variant" id="VAR_053350" description="In dbSNP:rs17164164.">
    <original>V</original>
    <variation>L</variation>
    <location>
        <position position="23"/>
    </location>
</feature>
<feature type="sequence variant" id="VAR_053351" description="In dbSNP:rs10260248.">
    <original>S</original>
    <variation>Y</variation>
    <location>
        <position position="187"/>
    </location>
</feature>
<name>T2R40_HUMAN</name>
<dbReference type="EMBL" id="AF494229">
    <property type="protein sequence ID" value="AAM19320.1"/>
    <property type="molecule type" value="Genomic_DNA"/>
</dbReference>
<dbReference type="EMBL" id="AY724957">
    <property type="protein sequence ID" value="AAU21153.1"/>
    <property type="molecule type" value="Genomic_DNA"/>
</dbReference>
<dbReference type="EMBL" id="CH236959">
    <property type="protein sequence ID" value="EAL23782.1"/>
    <property type="molecule type" value="Genomic_DNA"/>
</dbReference>
<dbReference type="EMBL" id="CH471198">
    <property type="protein sequence ID" value="EAW51882.1"/>
    <property type="molecule type" value="Genomic_DNA"/>
</dbReference>
<dbReference type="EMBL" id="BC101795">
    <property type="protein sequence ID" value="AAI01796.1"/>
    <property type="molecule type" value="mRNA"/>
</dbReference>
<dbReference type="EMBL" id="BC101797">
    <property type="protein sequence ID" value="AAI01798.1"/>
    <property type="molecule type" value="mRNA"/>
</dbReference>
<dbReference type="CCDS" id="CCDS43662.1"/>
<dbReference type="RefSeq" id="NP_795363.1">
    <property type="nucleotide sequence ID" value="NM_176882.2"/>
</dbReference>
<dbReference type="SMR" id="P59535"/>
<dbReference type="BioGRID" id="129241">
    <property type="interactions" value="1"/>
</dbReference>
<dbReference type="FunCoup" id="P59535">
    <property type="interactions" value="351"/>
</dbReference>
<dbReference type="STRING" id="9606.ENSP00000386210"/>
<dbReference type="ChEMBL" id="CHEMBL4523250"/>
<dbReference type="DrugCentral" id="P59535"/>
<dbReference type="GuidetoPHARMACOLOGY" id="676"/>
<dbReference type="GlyCosmos" id="P59535">
    <property type="glycosylation" value="2 sites, No reported glycans"/>
</dbReference>
<dbReference type="GlyGen" id="P59535">
    <property type="glycosylation" value="2 sites"/>
</dbReference>
<dbReference type="iPTMnet" id="P59535"/>
<dbReference type="PhosphoSitePlus" id="P59535"/>
<dbReference type="BioMuta" id="TAS2R40"/>
<dbReference type="DMDM" id="29839473"/>
<dbReference type="PaxDb" id="9606-ENSP00000386210"/>
<dbReference type="PeptideAtlas" id="P59535"/>
<dbReference type="Antibodypedia" id="32610">
    <property type="antibodies" value="18 antibodies from 10 providers"/>
</dbReference>
<dbReference type="DNASU" id="259286"/>
<dbReference type="Ensembl" id="ENST00000408947.4">
    <property type="protein sequence ID" value="ENSP00000386210.3"/>
    <property type="gene ID" value="ENSG00000221937.4"/>
</dbReference>
<dbReference type="GeneID" id="259286"/>
<dbReference type="KEGG" id="hsa:259286"/>
<dbReference type="MANE-Select" id="ENST00000408947.4">
    <property type="protein sequence ID" value="ENSP00000386210.3"/>
    <property type="RefSeq nucleotide sequence ID" value="NM_176882.2"/>
    <property type="RefSeq protein sequence ID" value="NP_795363.1"/>
</dbReference>
<dbReference type="UCSC" id="uc011ksx.3">
    <property type="organism name" value="human"/>
</dbReference>
<dbReference type="AGR" id="HGNC:18885"/>
<dbReference type="CTD" id="259286"/>
<dbReference type="GeneCards" id="TAS2R40"/>
<dbReference type="HGNC" id="HGNC:18885">
    <property type="gene designation" value="TAS2R40"/>
</dbReference>
<dbReference type="HPA" id="ENSG00000221937">
    <property type="expression patterns" value="Not detected"/>
</dbReference>
<dbReference type="MIM" id="613964">
    <property type="type" value="gene"/>
</dbReference>
<dbReference type="neXtProt" id="NX_P59535"/>
<dbReference type="PharmGKB" id="PA38738"/>
<dbReference type="VEuPathDB" id="HostDB:ENSG00000221937"/>
<dbReference type="eggNOG" id="ENOG502SKRK">
    <property type="taxonomic scope" value="Eukaryota"/>
</dbReference>
<dbReference type="GeneTree" id="ENSGT01100000263477"/>
<dbReference type="HOGENOM" id="CLU_072337_3_0_1"/>
<dbReference type="InParanoid" id="P59535"/>
<dbReference type="OMA" id="NFTHPLF"/>
<dbReference type="OrthoDB" id="8876749at2759"/>
<dbReference type="PAN-GO" id="P59535">
    <property type="GO annotations" value="3 GO annotations based on evolutionary models"/>
</dbReference>
<dbReference type="PhylomeDB" id="P59535"/>
<dbReference type="TreeFam" id="TF335891"/>
<dbReference type="PathwayCommons" id="P59535"/>
<dbReference type="Reactome" id="R-HSA-418594">
    <property type="pathway name" value="G alpha (i) signalling events"/>
</dbReference>
<dbReference type="Reactome" id="R-HSA-420499">
    <property type="pathway name" value="Class C/3 (Metabotropic glutamate/pheromone receptors)"/>
</dbReference>
<dbReference type="Reactome" id="R-HSA-9717207">
    <property type="pathway name" value="Sensory perception of sweet, bitter, and umami (glutamate) taste"/>
</dbReference>
<dbReference type="BioGRID-ORCS" id="259286">
    <property type="hits" value="15 hits in 1138 CRISPR screens"/>
</dbReference>
<dbReference type="GeneWiki" id="TAS2R40"/>
<dbReference type="GenomeRNAi" id="259286"/>
<dbReference type="Pharos" id="P59535">
    <property type="development level" value="Tchem"/>
</dbReference>
<dbReference type="PRO" id="PR:P59535"/>
<dbReference type="Proteomes" id="UP000005640">
    <property type="component" value="Chromosome 7"/>
</dbReference>
<dbReference type="RNAct" id="P59535">
    <property type="molecule type" value="protein"/>
</dbReference>
<dbReference type="Bgee" id="ENSG00000221937">
    <property type="expression patterns" value="Expressed in corpus callosum and 25 other cell types or tissues"/>
</dbReference>
<dbReference type="GO" id="GO:0016020">
    <property type="term" value="C:membrane"/>
    <property type="evidence" value="ECO:0000318"/>
    <property type="project" value="GO_Central"/>
</dbReference>
<dbReference type="GO" id="GO:0005886">
    <property type="term" value="C:plasma membrane"/>
    <property type="evidence" value="ECO:0000304"/>
    <property type="project" value="Reactome"/>
</dbReference>
<dbReference type="GO" id="GO:0033038">
    <property type="term" value="F:bitter taste receptor activity"/>
    <property type="evidence" value="ECO:0000314"/>
    <property type="project" value="UniProtKB"/>
</dbReference>
<dbReference type="GO" id="GO:0004930">
    <property type="term" value="F:G protein-coupled receptor activity"/>
    <property type="evidence" value="ECO:0007669"/>
    <property type="project" value="UniProtKB-KW"/>
</dbReference>
<dbReference type="GO" id="GO:0001580">
    <property type="term" value="P:detection of chemical stimulus involved in sensory perception of bitter taste"/>
    <property type="evidence" value="ECO:0000314"/>
    <property type="project" value="UniProtKB"/>
</dbReference>
<dbReference type="CDD" id="cd15014">
    <property type="entry name" value="7tm_TAS2R40"/>
    <property type="match status" value="1"/>
</dbReference>
<dbReference type="FunFam" id="1.20.1070.10:FF:000055">
    <property type="entry name" value="Taste receptor type 2"/>
    <property type="match status" value="1"/>
</dbReference>
<dbReference type="Gene3D" id="1.20.1070.10">
    <property type="entry name" value="Rhodopsin 7-helix transmembrane proteins"/>
    <property type="match status" value="1"/>
</dbReference>
<dbReference type="InterPro" id="IPR007960">
    <property type="entry name" value="TAS2R"/>
</dbReference>
<dbReference type="PANTHER" id="PTHR11394">
    <property type="entry name" value="TASTE RECEPTOR TYPE 2"/>
    <property type="match status" value="1"/>
</dbReference>
<dbReference type="PANTHER" id="PTHR11394:SF47">
    <property type="entry name" value="TASTE RECEPTOR TYPE 2 MEMBER 40"/>
    <property type="match status" value="1"/>
</dbReference>
<dbReference type="Pfam" id="PF05296">
    <property type="entry name" value="TAS2R"/>
    <property type="match status" value="1"/>
</dbReference>
<dbReference type="SUPFAM" id="SSF81321">
    <property type="entry name" value="Family A G protein-coupled receptor-like"/>
    <property type="match status" value="1"/>
</dbReference>
<evidence type="ECO:0000255" key="1"/>
<evidence type="ECO:0000305" key="2"/>
<gene>
    <name type="primary">TAS2R40</name>
    <name type="synonym">GPR60</name>
</gene>
<reference key="1">
    <citation type="journal article" date="2002" name="Nat. Genet.">
        <title>The human TAS2R16 receptor mediates bitter taste in response to beta-glucopyranosides.</title>
        <authorList>
            <person name="Bufe B."/>
            <person name="Hofmann T."/>
            <person name="Krautwurst D."/>
            <person name="Raguse J.-D."/>
            <person name="Meyerhof W."/>
        </authorList>
    </citation>
    <scope>NUCLEOTIDE SEQUENCE [GENOMIC DNA]</scope>
</reference>
<reference key="2">
    <citation type="journal article" date="2005" name="Mol. Biol. Evol.">
        <title>Evolution of bitter taste receptors in humans and apes.</title>
        <authorList>
            <person name="Fischer A."/>
            <person name="Gilad Y."/>
            <person name="Man O."/>
            <person name="Paeaebo S."/>
        </authorList>
    </citation>
    <scope>NUCLEOTIDE SEQUENCE [GENOMIC DNA]</scope>
</reference>
<reference key="3">
    <citation type="journal article" date="2003" name="Science">
        <title>Human chromosome 7: DNA sequence and biology.</title>
        <authorList>
            <person name="Scherer S.W."/>
            <person name="Cheung J."/>
            <person name="MacDonald J.R."/>
            <person name="Osborne L.R."/>
            <person name="Nakabayashi K."/>
            <person name="Herbrick J.-A."/>
            <person name="Carson A.R."/>
            <person name="Parker-Katiraee L."/>
            <person name="Skaug J."/>
            <person name="Khaja R."/>
            <person name="Zhang J."/>
            <person name="Hudek A.K."/>
            <person name="Li M."/>
            <person name="Haddad M."/>
            <person name="Duggan G.E."/>
            <person name="Fernandez B.A."/>
            <person name="Kanematsu E."/>
            <person name="Gentles S."/>
            <person name="Christopoulos C.C."/>
            <person name="Choufani S."/>
            <person name="Kwasnicka D."/>
            <person name="Zheng X.H."/>
            <person name="Lai Z."/>
            <person name="Nusskern D.R."/>
            <person name="Zhang Q."/>
            <person name="Gu Z."/>
            <person name="Lu F."/>
            <person name="Zeesman S."/>
            <person name="Nowaczyk M.J."/>
            <person name="Teshima I."/>
            <person name="Chitayat D."/>
            <person name="Shuman C."/>
            <person name="Weksberg R."/>
            <person name="Zackai E.H."/>
            <person name="Grebe T.A."/>
            <person name="Cox S.R."/>
            <person name="Kirkpatrick S.J."/>
            <person name="Rahman N."/>
            <person name="Friedman J.M."/>
            <person name="Heng H.H.Q."/>
            <person name="Pelicci P.G."/>
            <person name="Lo-Coco F."/>
            <person name="Belloni E."/>
            <person name="Shaffer L.G."/>
            <person name="Pober B."/>
            <person name="Morton C.C."/>
            <person name="Gusella J.F."/>
            <person name="Bruns G.A.P."/>
            <person name="Korf B.R."/>
            <person name="Quade B.J."/>
            <person name="Ligon A.H."/>
            <person name="Ferguson H."/>
            <person name="Higgins A.W."/>
            <person name="Leach N.T."/>
            <person name="Herrick S.R."/>
            <person name="Lemyre E."/>
            <person name="Farra C.G."/>
            <person name="Kim H.-G."/>
            <person name="Summers A.M."/>
            <person name="Gripp K.W."/>
            <person name="Roberts W."/>
            <person name="Szatmari P."/>
            <person name="Winsor E.J.T."/>
            <person name="Grzeschik K.-H."/>
            <person name="Teebi A."/>
            <person name="Minassian B.A."/>
            <person name="Kere J."/>
            <person name="Armengol L."/>
            <person name="Pujana M.A."/>
            <person name="Estivill X."/>
            <person name="Wilson M.D."/>
            <person name="Koop B.F."/>
            <person name="Tosi S."/>
            <person name="Moore G.E."/>
            <person name="Boright A.P."/>
            <person name="Zlotorynski E."/>
            <person name="Kerem B."/>
            <person name="Kroisel P.M."/>
            <person name="Petek E."/>
            <person name="Oscier D.G."/>
            <person name="Mould S.J."/>
            <person name="Doehner H."/>
            <person name="Doehner K."/>
            <person name="Rommens J.M."/>
            <person name="Vincent J.B."/>
            <person name="Venter J.C."/>
            <person name="Li P.W."/>
            <person name="Mural R.J."/>
            <person name="Adams M.D."/>
            <person name="Tsui L.-C."/>
        </authorList>
    </citation>
    <scope>NUCLEOTIDE SEQUENCE [LARGE SCALE GENOMIC DNA]</scope>
</reference>
<reference key="4">
    <citation type="submission" date="2005-09" db="EMBL/GenBank/DDBJ databases">
        <authorList>
            <person name="Mural R.J."/>
            <person name="Istrail S."/>
            <person name="Sutton G.G."/>
            <person name="Florea L."/>
            <person name="Halpern A.L."/>
            <person name="Mobarry C.M."/>
            <person name="Lippert R."/>
            <person name="Walenz B."/>
            <person name="Shatkay H."/>
            <person name="Dew I."/>
            <person name="Miller J.R."/>
            <person name="Flanigan M.J."/>
            <person name="Edwards N.J."/>
            <person name="Bolanos R."/>
            <person name="Fasulo D."/>
            <person name="Halldorsson B.V."/>
            <person name="Hannenhalli S."/>
            <person name="Turner R."/>
            <person name="Yooseph S."/>
            <person name="Lu F."/>
            <person name="Nusskern D.R."/>
            <person name="Shue B.C."/>
            <person name="Zheng X.H."/>
            <person name="Zhong F."/>
            <person name="Delcher A.L."/>
            <person name="Huson D.H."/>
            <person name="Kravitz S.A."/>
            <person name="Mouchard L."/>
            <person name="Reinert K."/>
            <person name="Remington K.A."/>
            <person name="Clark A.G."/>
            <person name="Waterman M.S."/>
            <person name="Eichler E.E."/>
            <person name="Adams M.D."/>
            <person name="Hunkapiller M.W."/>
            <person name="Myers E.W."/>
            <person name="Venter J.C."/>
        </authorList>
    </citation>
    <scope>NUCLEOTIDE SEQUENCE [LARGE SCALE GENOMIC DNA]</scope>
</reference>
<reference key="5">
    <citation type="journal article" date="2004" name="Genome Res.">
        <title>The status, quality, and expansion of the NIH full-length cDNA project: the Mammalian Gene Collection (MGC).</title>
        <authorList>
            <consortium name="The MGC Project Team"/>
        </authorList>
    </citation>
    <scope>NUCLEOTIDE SEQUENCE [LARGE SCALE MRNA]</scope>
</reference>
<reference key="6">
    <citation type="journal article" date="2002" name="Curr. Opin. Neurobiol.">
        <title>Receptors for bitter and sweet taste.</title>
        <authorList>
            <person name="Montmayeur J.-P."/>
            <person name="Matsunami H."/>
        </authorList>
    </citation>
    <scope>REVIEW</scope>
</reference>
<reference key="7">
    <citation type="journal article" date="2002" name="J. Biol. Chem.">
        <title>Molecular mechanisms of bitter and sweet taste transduction.</title>
        <authorList>
            <person name="Margolskee R.F."/>
        </authorList>
    </citation>
    <scope>REVIEW</scope>
</reference>
<reference key="8">
    <citation type="journal article" date="2003" name="Cell">
        <title>Coding of sweet, bitter, and umami tastes: different receptor cells sharing similar signaling pathways.</title>
        <authorList>
            <person name="Zhang Y."/>
            <person name="Hoon M.A."/>
            <person name="Chandrashekar J."/>
            <person name="Mueller K.L."/>
            <person name="Cook B."/>
            <person name="Wu D."/>
            <person name="Zuker C.S."/>
            <person name="Ryba N.J."/>
        </authorList>
    </citation>
    <scope>REVIEW</scope>
</reference>
<comment type="function">
    <text>Gustducin-coupled receptor implicated in the perception of bitter compounds in the oral cavity and the gastrointestinal tract. Signals through PLCB2 and the calcium-regulated cation channel TRPM5.</text>
</comment>
<comment type="subcellular location">
    <subcellularLocation>
        <location>Membrane</location>
        <topology>Multi-pass membrane protein</topology>
    </subcellularLocation>
</comment>
<comment type="tissue specificity">
    <text>Expressed in subsets of taste receptor cells of the tongue and exclusively in gustducin-positive cells.</text>
</comment>
<comment type="miscellaneous">
    <text>Several bitter taste receptors are expressed in a single taste receptor cell.</text>
</comment>
<comment type="similarity">
    <text evidence="2">Belongs to the G-protein coupled receptor T2R family.</text>
</comment>
<protein>
    <recommendedName>
        <fullName>Taste receptor type 2 member 40</fullName>
        <shortName>T2R40</shortName>
    </recommendedName>
    <alternativeName>
        <fullName>G-protein coupled receptor 60</fullName>
    </alternativeName>
    <alternativeName>
        <fullName>Taste receptor type 2 member 58</fullName>
        <shortName>T2R58</shortName>
    </alternativeName>
</protein>
<sequence>MATVNTDATDKDISKFKVTFTLVVSGIECITGILGSGFITAIYGAEWARGKTLPTGDRIMLMLSFSRLLLQIWMMLENIFSLLFRIVYNQNSVYILFKVITVFLNHSNLWFAAWLKVFYCLRIANFNHPLFFLMKRKIIVLMPWLLRLSVLVSLSFSFPLSRDVFNVYVNSSIPIPSSNSTEKKYFSETNMVNLVFFYNMGIFVPLIMFILAATLLILSLKRHTLHMGSNATGSRDPSMKAHIGAIKATSYFLILYIFNAIALFLSTSNIFDTYSSWNILCKIIMAAYPAGHSVQLILGNPGLRRAWKRFQHQVPLYLKGQTL</sequence>
<organism>
    <name type="scientific">Homo sapiens</name>
    <name type="common">Human</name>
    <dbReference type="NCBI Taxonomy" id="9606"/>
    <lineage>
        <taxon>Eukaryota</taxon>
        <taxon>Metazoa</taxon>
        <taxon>Chordata</taxon>
        <taxon>Craniata</taxon>
        <taxon>Vertebrata</taxon>
        <taxon>Euteleostomi</taxon>
        <taxon>Mammalia</taxon>
        <taxon>Eutheria</taxon>
        <taxon>Euarchontoglires</taxon>
        <taxon>Primates</taxon>
        <taxon>Haplorrhini</taxon>
        <taxon>Catarrhini</taxon>
        <taxon>Hominidae</taxon>
        <taxon>Homo</taxon>
    </lineage>
</organism>
<accession>P59535</accession>
<accession>A4D2I2</accession>
<accession>Q645W6</accession>
<proteinExistence type="evidence at transcript level"/>
<keyword id="KW-0297">G-protein coupled receptor</keyword>
<keyword id="KW-0325">Glycoprotein</keyword>
<keyword id="KW-0472">Membrane</keyword>
<keyword id="KW-0675">Receptor</keyword>
<keyword id="KW-1185">Reference proteome</keyword>
<keyword id="KW-0716">Sensory transduction</keyword>
<keyword id="KW-0919">Taste</keyword>
<keyword id="KW-0807">Transducer</keyword>
<keyword id="KW-0812">Transmembrane</keyword>
<keyword id="KW-1133">Transmembrane helix</keyword>